<evidence type="ECO:0000250" key="1"/>
<evidence type="ECO:0000255" key="2"/>
<evidence type="ECO:0000305" key="3"/>
<keyword id="KW-0445">Lipid transport</keyword>
<keyword id="KW-1185">Reference proteome</keyword>
<keyword id="KW-0732">Signal</keyword>
<keyword id="KW-0813">Transport</keyword>
<feature type="signal peptide" evidence="2">
    <location>
        <begin position="1"/>
        <end position="17"/>
    </location>
</feature>
<feature type="propeptide" id="PRO_0000019895" evidence="1">
    <location>
        <begin position="18"/>
        <end position="52"/>
    </location>
</feature>
<feature type="chain" id="PRO_0000019896" description="Phosphatidylglycerol/phosphatidylinositol transfer protein">
    <location>
        <begin position="53"/>
        <end position="189"/>
    </location>
</feature>
<protein>
    <recommendedName>
        <fullName>Phosphatidylglycerol/phosphatidylinositol transfer protein</fullName>
        <shortName>PG/PI-TP</shortName>
    </recommendedName>
</protein>
<gene>
    <name type="primary">NPC2</name>
    <name type="ordered locus">YALI0A04895g</name>
</gene>
<accession>Q6CHU5</accession>
<comment type="function">
    <text evidence="1">Catalyzes the intermembrane transfer of phosphatidylglycerol and phosphatidylinositol.</text>
</comment>
<comment type="subunit">
    <text evidence="1">Monomer.</text>
</comment>
<comment type="similarity">
    <text evidence="3">Belongs to the NPC2 family.</text>
</comment>
<reference key="1">
    <citation type="journal article" date="2004" name="Nature">
        <title>Genome evolution in yeasts.</title>
        <authorList>
            <person name="Dujon B."/>
            <person name="Sherman D."/>
            <person name="Fischer G."/>
            <person name="Durrens P."/>
            <person name="Casaregola S."/>
            <person name="Lafontaine I."/>
            <person name="de Montigny J."/>
            <person name="Marck C."/>
            <person name="Neuveglise C."/>
            <person name="Talla E."/>
            <person name="Goffard N."/>
            <person name="Frangeul L."/>
            <person name="Aigle M."/>
            <person name="Anthouard V."/>
            <person name="Babour A."/>
            <person name="Barbe V."/>
            <person name="Barnay S."/>
            <person name="Blanchin S."/>
            <person name="Beckerich J.-M."/>
            <person name="Beyne E."/>
            <person name="Bleykasten C."/>
            <person name="Boisrame A."/>
            <person name="Boyer J."/>
            <person name="Cattolico L."/>
            <person name="Confanioleri F."/>
            <person name="de Daruvar A."/>
            <person name="Despons L."/>
            <person name="Fabre E."/>
            <person name="Fairhead C."/>
            <person name="Ferry-Dumazet H."/>
            <person name="Groppi A."/>
            <person name="Hantraye F."/>
            <person name="Hennequin C."/>
            <person name="Jauniaux N."/>
            <person name="Joyet P."/>
            <person name="Kachouri R."/>
            <person name="Kerrest A."/>
            <person name="Koszul R."/>
            <person name="Lemaire M."/>
            <person name="Lesur I."/>
            <person name="Ma L."/>
            <person name="Muller H."/>
            <person name="Nicaud J.-M."/>
            <person name="Nikolski M."/>
            <person name="Oztas S."/>
            <person name="Ozier-Kalogeropoulos O."/>
            <person name="Pellenz S."/>
            <person name="Potier S."/>
            <person name="Richard G.-F."/>
            <person name="Straub M.-L."/>
            <person name="Suleau A."/>
            <person name="Swennen D."/>
            <person name="Tekaia F."/>
            <person name="Wesolowski-Louvel M."/>
            <person name="Westhof E."/>
            <person name="Wirth B."/>
            <person name="Zeniou-Meyer M."/>
            <person name="Zivanovic Y."/>
            <person name="Bolotin-Fukuhara M."/>
            <person name="Thierry A."/>
            <person name="Bouchier C."/>
            <person name="Caudron B."/>
            <person name="Scarpelli C."/>
            <person name="Gaillardin C."/>
            <person name="Weissenbach J."/>
            <person name="Wincker P."/>
            <person name="Souciet J.-L."/>
        </authorList>
    </citation>
    <scope>NUCLEOTIDE SEQUENCE [LARGE SCALE GENOMIC DNA]</scope>
    <source>
        <strain>CLIB 122 / E 150</strain>
    </source>
</reference>
<name>NPC2_YARLI</name>
<organism>
    <name type="scientific">Yarrowia lipolytica (strain CLIB 122 / E 150)</name>
    <name type="common">Yeast</name>
    <name type="synonym">Candida lipolytica</name>
    <dbReference type="NCBI Taxonomy" id="284591"/>
    <lineage>
        <taxon>Eukaryota</taxon>
        <taxon>Fungi</taxon>
        <taxon>Dikarya</taxon>
        <taxon>Ascomycota</taxon>
        <taxon>Saccharomycotina</taxon>
        <taxon>Dipodascomycetes</taxon>
        <taxon>Dipodascales</taxon>
        <taxon>Dipodascales incertae sedis</taxon>
        <taxon>Yarrowia</taxon>
    </lineage>
</organism>
<proteinExistence type="inferred from homology"/>
<dbReference type="EMBL" id="CR382127">
    <property type="protein sequence ID" value="CAG83691.1"/>
    <property type="molecule type" value="Genomic_DNA"/>
</dbReference>
<dbReference type="RefSeq" id="XP_499766.1">
    <property type="nucleotide sequence ID" value="XM_499766.1"/>
</dbReference>
<dbReference type="SMR" id="Q6CHU5"/>
<dbReference type="FunCoup" id="Q6CHU5">
    <property type="interactions" value="97"/>
</dbReference>
<dbReference type="STRING" id="284591.Q6CHU5"/>
<dbReference type="EnsemblFungi" id="CAG83691">
    <property type="protein sequence ID" value="CAG83691"/>
    <property type="gene ID" value="YALI0_A04895g"/>
</dbReference>
<dbReference type="KEGG" id="yli:2906213"/>
<dbReference type="VEuPathDB" id="FungiDB:YALI0_A04895g"/>
<dbReference type="HOGENOM" id="CLU_097982_0_1_1"/>
<dbReference type="InParanoid" id="Q6CHU5"/>
<dbReference type="OMA" id="HQTYDLC"/>
<dbReference type="OrthoDB" id="78241at4891"/>
<dbReference type="Proteomes" id="UP000001300">
    <property type="component" value="Chromosome A"/>
</dbReference>
<dbReference type="GO" id="GO:0032934">
    <property type="term" value="F:sterol binding"/>
    <property type="evidence" value="ECO:0000318"/>
    <property type="project" value="GO_Central"/>
</dbReference>
<dbReference type="GO" id="GO:0032366">
    <property type="term" value="P:intracellular sterol transport"/>
    <property type="evidence" value="ECO:0007669"/>
    <property type="project" value="InterPro"/>
</dbReference>
<dbReference type="GO" id="GO:0015918">
    <property type="term" value="P:sterol transport"/>
    <property type="evidence" value="ECO:0000318"/>
    <property type="project" value="GO_Central"/>
</dbReference>
<dbReference type="CDD" id="cd00917">
    <property type="entry name" value="PG-PI_TP"/>
    <property type="match status" value="1"/>
</dbReference>
<dbReference type="FunFam" id="2.60.40.770:FF:000004">
    <property type="entry name" value="Phosphatidylglycerol/phosphatidylinositol transfer protein"/>
    <property type="match status" value="1"/>
</dbReference>
<dbReference type="Gene3D" id="2.60.40.770">
    <property type="match status" value="1"/>
</dbReference>
<dbReference type="InterPro" id="IPR014756">
    <property type="entry name" value="Ig_E-set"/>
</dbReference>
<dbReference type="InterPro" id="IPR003172">
    <property type="entry name" value="ML_dom"/>
</dbReference>
<dbReference type="InterPro" id="IPR033917">
    <property type="entry name" value="ML_PG-PI_TP"/>
</dbReference>
<dbReference type="InterPro" id="IPR039670">
    <property type="entry name" value="NPC2-like"/>
</dbReference>
<dbReference type="PANTHER" id="PTHR11306">
    <property type="entry name" value="NIEMANN PICK TYPE C2 PROTEIN NPC2-RELATED"/>
    <property type="match status" value="1"/>
</dbReference>
<dbReference type="PANTHER" id="PTHR11306:SF0">
    <property type="entry name" value="PHOSPHATIDYLGLYCEROL_PHOSPHATIDYLINOSITOL TRANSFER PROTEIN"/>
    <property type="match status" value="1"/>
</dbReference>
<dbReference type="Pfam" id="PF02221">
    <property type="entry name" value="E1_DerP2_DerF2"/>
    <property type="match status" value="1"/>
</dbReference>
<dbReference type="SMART" id="SM00737">
    <property type="entry name" value="ML"/>
    <property type="match status" value="1"/>
</dbReference>
<dbReference type="SUPFAM" id="SSF81296">
    <property type="entry name" value="E set domains"/>
    <property type="match status" value="1"/>
</dbReference>
<sequence>MKLSILPLIALATAVVASPAPDANSMKLMNQAKDFGMSVAQGGLKDIAKTLDDEDIPGDSPISLCDAEYEQLLEIKHLSIDPNPPAKGQNLTIEASGYLYEDVEEGAYIEVEVRYGYIRLISQTLDLCEQSEQVDWSCPIKAGDLKLNKQIELPNEIPPGKYVAVARAYTVDDDLITCLLTTVTFPASL</sequence>